<keyword id="KW-0150">Chloroplast</keyword>
<keyword id="KW-0934">Plastid</keyword>
<keyword id="KW-0687">Ribonucleoprotein</keyword>
<keyword id="KW-0689">Ribosomal protein</keyword>
<keyword id="KW-0694">RNA-binding</keyword>
<keyword id="KW-0699">rRNA-binding</keyword>
<feature type="chain" id="PRO_0000130288" description="Small ribosomal subunit protein uS3c">
    <location>
        <begin position="1"/>
        <end position="217"/>
    </location>
</feature>
<feature type="domain" description="KH type-2">
    <location>
        <begin position="46"/>
        <end position="117"/>
    </location>
</feature>
<gene>
    <name type="primary">rps3</name>
</gene>
<name>RR3_MARPO</name>
<organism>
    <name type="scientific">Marchantia polymorpha</name>
    <name type="common">Common liverwort</name>
    <name type="synonym">Marchantia aquatica</name>
    <dbReference type="NCBI Taxonomy" id="3197"/>
    <lineage>
        <taxon>Eukaryota</taxon>
        <taxon>Viridiplantae</taxon>
        <taxon>Streptophyta</taxon>
        <taxon>Embryophyta</taxon>
        <taxon>Marchantiophyta</taxon>
        <taxon>Marchantiopsida</taxon>
        <taxon>Marchantiidae</taxon>
        <taxon>Marchantiales</taxon>
        <taxon>Marchantiaceae</taxon>
        <taxon>Marchantia</taxon>
    </lineage>
</organism>
<protein>
    <recommendedName>
        <fullName evidence="2">Small ribosomal subunit protein uS3c</fullName>
    </recommendedName>
    <alternativeName>
        <fullName>30S ribosomal protein S3, chloroplastic</fullName>
    </alternativeName>
</protein>
<evidence type="ECO:0000250" key="1"/>
<evidence type="ECO:0000305" key="2"/>
<dbReference type="EMBL" id="X04465">
    <property type="protein sequence ID" value="CAA28124.1"/>
    <property type="molecule type" value="Genomic_DNA"/>
</dbReference>
<dbReference type="PIR" id="A02701">
    <property type="entry name" value="R3LV3"/>
</dbReference>
<dbReference type="RefSeq" id="NP_039338.1">
    <property type="nucleotide sequence ID" value="NC_001319.1"/>
</dbReference>
<dbReference type="SMR" id="P06356"/>
<dbReference type="GeneID" id="2702571"/>
<dbReference type="GO" id="GO:0009507">
    <property type="term" value="C:chloroplast"/>
    <property type="evidence" value="ECO:0007669"/>
    <property type="project" value="UniProtKB-SubCell"/>
</dbReference>
<dbReference type="GO" id="GO:1990904">
    <property type="term" value="C:ribonucleoprotein complex"/>
    <property type="evidence" value="ECO:0007669"/>
    <property type="project" value="UniProtKB-KW"/>
</dbReference>
<dbReference type="GO" id="GO:0005840">
    <property type="term" value="C:ribosome"/>
    <property type="evidence" value="ECO:0007669"/>
    <property type="project" value="UniProtKB-KW"/>
</dbReference>
<dbReference type="GO" id="GO:0019843">
    <property type="term" value="F:rRNA binding"/>
    <property type="evidence" value="ECO:0007669"/>
    <property type="project" value="UniProtKB-UniRule"/>
</dbReference>
<dbReference type="GO" id="GO:0003735">
    <property type="term" value="F:structural constituent of ribosome"/>
    <property type="evidence" value="ECO:0007669"/>
    <property type="project" value="InterPro"/>
</dbReference>
<dbReference type="GO" id="GO:0006412">
    <property type="term" value="P:translation"/>
    <property type="evidence" value="ECO:0007669"/>
    <property type="project" value="UniProtKB-UniRule"/>
</dbReference>
<dbReference type="CDD" id="cd02412">
    <property type="entry name" value="KH-II_30S_S3"/>
    <property type="match status" value="1"/>
</dbReference>
<dbReference type="Gene3D" id="3.30.300.20">
    <property type="match status" value="1"/>
</dbReference>
<dbReference type="Gene3D" id="3.30.1140.32">
    <property type="entry name" value="Ribosomal protein S3, C-terminal domain"/>
    <property type="match status" value="1"/>
</dbReference>
<dbReference type="HAMAP" id="MF_01309_B">
    <property type="entry name" value="Ribosomal_uS3_B"/>
    <property type="match status" value="1"/>
</dbReference>
<dbReference type="InterPro" id="IPR015946">
    <property type="entry name" value="KH_dom-like_a/b"/>
</dbReference>
<dbReference type="InterPro" id="IPR004044">
    <property type="entry name" value="KH_dom_type_2"/>
</dbReference>
<dbReference type="InterPro" id="IPR009019">
    <property type="entry name" value="KH_sf_prok-type"/>
</dbReference>
<dbReference type="InterPro" id="IPR036419">
    <property type="entry name" value="Ribosomal_S3_C_sf"/>
</dbReference>
<dbReference type="InterPro" id="IPR005704">
    <property type="entry name" value="Ribosomal_uS3_bac-typ"/>
</dbReference>
<dbReference type="InterPro" id="IPR001351">
    <property type="entry name" value="Ribosomal_uS3_C"/>
</dbReference>
<dbReference type="InterPro" id="IPR018280">
    <property type="entry name" value="Ribosomal_uS3_CS"/>
</dbReference>
<dbReference type="NCBIfam" id="TIGR01009">
    <property type="entry name" value="rpsC_bact"/>
    <property type="match status" value="1"/>
</dbReference>
<dbReference type="PANTHER" id="PTHR11760">
    <property type="entry name" value="30S/40S RIBOSOMAL PROTEIN S3"/>
    <property type="match status" value="1"/>
</dbReference>
<dbReference type="PANTHER" id="PTHR11760:SF19">
    <property type="entry name" value="SMALL RIBOSOMAL SUBUNIT PROTEIN US3C"/>
    <property type="match status" value="1"/>
</dbReference>
<dbReference type="Pfam" id="PF00189">
    <property type="entry name" value="Ribosomal_S3_C"/>
    <property type="match status" value="1"/>
</dbReference>
<dbReference type="SUPFAM" id="SSF54814">
    <property type="entry name" value="Prokaryotic type KH domain (KH-domain type II)"/>
    <property type="match status" value="1"/>
</dbReference>
<dbReference type="SUPFAM" id="SSF54821">
    <property type="entry name" value="Ribosomal protein S3 C-terminal domain"/>
    <property type="match status" value="1"/>
</dbReference>
<dbReference type="PROSITE" id="PS50823">
    <property type="entry name" value="KH_TYPE_2"/>
    <property type="match status" value="1"/>
</dbReference>
<dbReference type="PROSITE" id="PS00548">
    <property type="entry name" value="RIBOSOMAL_S3"/>
    <property type="match status" value="1"/>
</dbReference>
<reference key="1">
    <citation type="journal article" date="1988" name="J. Mol. Biol.">
        <title>Structure and organization of Marchantia polymorpha chloroplast genome. III. Gene organization of the large single copy region from rbcL to trnI(CAU).</title>
        <authorList>
            <person name="Fukuzawa H."/>
            <person name="Kohchi T."/>
            <person name="Sano T."/>
            <person name="Shirai H."/>
            <person name="Umesono K."/>
            <person name="Inokuchi H."/>
            <person name="Ozeki H."/>
            <person name="Ohyama K."/>
        </authorList>
    </citation>
    <scope>NUCLEOTIDE SEQUENCE [GENOMIC DNA]</scope>
</reference>
<reference key="2">
    <citation type="journal article" date="1986" name="Nature">
        <title>Chloroplast gene organization deduced from complete sequence of liverwort Marchantia polymorpha chloroplast DNA.</title>
        <authorList>
            <person name="Ohyama K."/>
            <person name="Fukuzawa H."/>
            <person name="Kohchi T."/>
            <person name="Shirai H."/>
            <person name="Sano T."/>
            <person name="Sano S."/>
            <person name="Umesono K."/>
            <person name="Shiki Y."/>
            <person name="Takeuchi M."/>
            <person name="Chang Z."/>
            <person name="Aota S."/>
            <person name="Inokuchi H."/>
            <person name="Ozeki H."/>
        </authorList>
    </citation>
    <scope>NUCLEOTIDE SEQUENCE [LARGE SCALE GENOMIC DNA]</scope>
</reference>
<sequence length="217" mass="25055">MGQKINPLGFRLGITQNHRSYWFANKKYSKVFEEDKKIRDCIELYVQKHIKNSSNYGGIARVEIKRKTDLIQVEIYTGFPALLVESRGQGIEQLKLNVQNILSSEDRRLRMTLIEIAKPYGEPKILAKKIALKLESRVAFRRTMKKAIELAKKGNIKGIKIQIAGRLNGAEIARVEWAREGRVPLQTIRARINYCYYAAQTIYGVLGIKVWIFQDEE</sequence>
<proteinExistence type="inferred from homology"/>
<comment type="subunit">
    <text evidence="1">Part of the 30S ribosomal subunit.</text>
</comment>
<comment type="subcellular location">
    <subcellularLocation>
        <location>Plastid</location>
        <location>Chloroplast</location>
    </subcellularLocation>
</comment>
<comment type="similarity">
    <text evidence="2">Belongs to the universal ribosomal protein uS3 family.</text>
</comment>
<geneLocation type="chloroplast"/>
<accession>P06356</accession>